<name>RSMJ_YERP3</name>
<accession>A7FP06</accession>
<reference key="1">
    <citation type="journal article" date="2007" name="PLoS Genet.">
        <title>The complete genome sequence of Yersinia pseudotuberculosis IP31758, the causative agent of Far East scarlet-like fever.</title>
        <authorList>
            <person name="Eppinger M."/>
            <person name="Rosovitz M.J."/>
            <person name="Fricke W.F."/>
            <person name="Rasko D.A."/>
            <person name="Kokorina G."/>
            <person name="Fayolle C."/>
            <person name="Lindler L.E."/>
            <person name="Carniel E."/>
            <person name="Ravel J."/>
        </authorList>
    </citation>
    <scope>NUCLEOTIDE SEQUENCE [LARGE SCALE GENOMIC DNA]</scope>
    <source>
        <strain>IP 31758</strain>
    </source>
</reference>
<organism>
    <name type="scientific">Yersinia pseudotuberculosis serotype O:1b (strain IP 31758)</name>
    <dbReference type="NCBI Taxonomy" id="349747"/>
    <lineage>
        <taxon>Bacteria</taxon>
        <taxon>Pseudomonadati</taxon>
        <taxon>Pseudomonadota</taxon>
        <taxon>Gammaproteobacteria</taxon>
        <taxon>Enterobacterales</taxon>
        <taxon>Yersiniaceae</taxon>
        <taxon>Yersinia</taxon>
    </lineage>
</organism>
<protein>
    <recommendedName>
        <fullName evidence="1">Ribosomal RNA small subunit methyltransferase J</fullName>
        <ecNumber evidence="1">2.1.1.242</ecNumber>
    </recommendedName>
    <alternativeName>
        <fullName evidence="1">16S rRNA m2G1516 methyltransferase</fullName>
    </alternativeName>
    <alternativeName>
        <fullName evidence="1">rRNA (guanine-N(2)-)-methyltransferase</fullName>
    </alternativeName>
</protein>
<proteinExistence type="inferred from homology"/>
<dbReference type="EC" id="2.1.1.242" evidence="1"/>
<dbReference type="EMBL" id="CP000720">
    <property type="protein sequence ID" value="ABS48554.1"/>
    <property type="molecule type" value="Genomic_DNA"/>
</dbReference>
<dbReference type="RefSeq" id="WP_002215483.1">
    <property type="nucleotide sequence ID" value="NC_009708.1"/>
</dbReference>
<dbReference type="SMR" id="A7FP06"/>
<dbReference type="GeneID" id="96663312"/>
<dbReference type="KEGG" id="ypi:YpsIP31758_4038"/>
<dbReference type="HOGENOM" id="CLU_076324_0_0_6"/>
<dbReference type="Proteomes" id="UP000002412">
    <property type="component" value="Chromosome"/>
</dbReference>
<dbReference type="GO" id="GO:0005737">
    <property type="term" value="C:cytoplasm"/>
    <property type="evidence" value="ECO:0007669"/>
    <property type="project" value="UniProtKB-SubCell"/>
</dbReference>
<dbReference type="GO" id="GO:0008990">
    <property type="term" value="F:rRNA (guanine-N2-)-methyltransferase activity"/>
    <property type="evidence" value="ECO:0007669"/>
    <property type="project" value="UniProtKB-UniRule"/>
</dbReference>
<dbReference type="CDD" id="cd02440">
    <property type="entry name" value="AdoMet_MTases"/>
    <property type="match status" value="1"/>
</dbReference>
<dbReference type="Gene3D" id="3.40.50.150">
    <property type="entry name" value="Vaccinia Virus protein VP39"/>
    <property type="match status" value="1"/>
</dbReference>
<dbReference type="Gene3D" id="3.40.1630.10">
    <property type="entry name" value="YhiQ-like domain"/>
    <property type="match status" value="1"/>
</dbReference>
<dbReference type="HAMAP" id="MF_01523">
    <property type="entry name" value="16SrRNA_methyltr_J"/>
    <property type="match status" value="1"/>
</dbReference>
<dbReference type="InterPro" id="IPR007536">
    <property type="entry name" value="16SrRNA_methylTrfase_J"/>
</dbReference>
<dbReference type="InterPro" id="IPR029063">
    <property type="entry name" value="SAM-dependent_MTases_sf"/>
</dbReference>
<dbReference type="NCBIfam" id="NF008012">
    <property type="entry name" value="PRK10742.1"/>
    <property type="match status" value="1"/>
</dbReference>
<dbReference type="PANTHER" id="PTHR36112">
    <property type="entry name" value="RIBOSOMAL RNA SMALL SUBUNIT METHYLTRANSFERASE J"/>
    <property type="match status" value="1"/>
</dbReference>
<dbReference type="PANTHER" id="PTHR36112:SF1">
    <property type="entry name" value="RIBOSOMAL RNA SMALL SUBUNIT METHYLTRANSFERASE J"/>
    <property type="match status" value="1"/>
</dbReference>
<dbReference type="Pfam" id="PF04445">
    <property type="entry name" value="SAM_MT"/>
    <property type="match status" value="1"/>
</dbReference>
<dbReference type="SUPFAM" id="SSF53335">
    <property type="entry name" value="S-adenosyl-L-methionine-dependent methyltransferases"/>
    <property type="match status" value="1"/>
</dbReference>
<feature type="chain" id="PRO_0000316265" description="Ribosomal RNA small subunit methyltransferase J">
    <location>
        <begin position="1"/>
        <end position="256"/>
    </location>
</feature>
<feature type="binding site" evidence="1">
    <location>
        <begin position="104"/>
        <end position="105"/>
    </location>
    <ligand>
        <name>S-adenosyl-L-methionine</name>
        <dbReference type="ChEBI" id="CHEBI:59789"/>
    </ligand>
</feature>
<feature type="binding site" evidence="1">
    <location>
        <begin position="120"/>
        <end position="121"/>
    </location>
    <ligand>
        <name>S-adenosyl-L-methionine</name>
        <dbReference type="ChEBI" id="CHEBI:59789"/>
    </ligand>
</feature>
<feature type="binding site" evidence="1">
    <location>
        <begin position="156"/>
        <end position="157"/>
    </location>
    <ligand>
        <name>S-adenosyl-L-methionine</name>
        <dbReference type="ChEBI" id="CHEBI:59789"/>
    </ligand>
</feature>
<feature type="binding site" evidence="1">
    <location>
        <position position="174"/>
    </location>
    <ligand>
        <name>S-adenosyl-L-methionine</name>
        <dbReference type="ChEBI" id="CHEBI:59789"/>
    </ligand>
</feature>
<evidence type="ECO:0000255" key="1">
    <source>
        <dbReference type="HAMAP-Rule" id="MF_01523"/>
    </source>
</evidence>
<keyword id="KW-0963">Cytoplasm</keyword>
<keyword id="KW-0489">Methyltransferase</keyword>
<keyword id="KW-0698">rRNA processing</keyword>
<keyword id="KW-0949">S-adenosyl-L-methionine</keyword>
<keyword id="KW-0808">Transferase</keyword>
<sequence length="256" mass="27595">MSHVSICLLSEAGADPGALSILADRWGLVSDDQAVMALVLTAERLELRKRDEPKLGGIYVDFVSGTQAHRRKFGGGRGEAVAKAVGIKKGYLPRVVDATAGLGRDAFVLAALGCQVQMLERNPVVAALLDDGLRRGYLDAEIGPWLRERLTLLHASSLTALVAIEPRPEVVYLDPMYPHRQKSALVKKEMRVFQSLVGADNDADGLLAPARALATKRVVVKRPDYAEPLAGVAAQAAVVTKSHRFDIYPSSVTPPR</sequence>
<comment type="function">
    <text evidence="1">Specifically methylates the guanosine in position 1516 of 16S rRNA.</text>
</comment>
<comment type="catalytic activity">
    <reaction evidence="1">
        <text>guanosine(1516) in 16S rRNA + S-adenosyl-L-methionine = N(2)-methylguanosine(1516) in 16S rRNA + S-adenosyl-L-homocysteine + H(+)</text>
        <dbReference type="Rhea" id="RHEA:43220"/>
        <dbReference type="Rhea" id="RHEA-COMP:10412"/>
        <dbReference type="Rhea" id="RHEA-COMP:10413"/>
        <dbReference type="ChEBI" id="CHEBI:15378"/>
        <dbReference type="ChEBI" id="CHEBI:57856"/>
        <dbReference type="ChEBI" id="CHEBI:59789"/>
        <dbReference type="ChEBI" id="CHEBI:74269"/>
        <dbReference type="ChEBI" id="CHEBI:74481"/>
        <dbReference type="EC" id="2.1.1.242"/>
    </reaction>
</comment>
<comment type="subcellular location">
    <subcellularLocation>
        <location evidence="1">Cytoplasm</location>
    </subcellularLocation>
</comment>
<comment type="similarity">
    <text evidence="1">Belongs to the methyltransferase superfamily. RsmJ family.</text>
</comment>
<gene>
    <name evidence="1" type="primary">rsmJ</name>
    <name type="ordered locus">YpsIP31758_4038</name>
</gene>